<organism>
    <name type="scientific">Coxiella burnetii (strain RSA 493 / Nine Mile phase I)</name>
    <dbReference type="NCBI Taxonomy" id="227377"/>
    <lineage>
        <taxon>Bacteria</taxon>
        <taxon>Pseudomonadati</taxon>
        <taxon>Pseudomonadota</taxon>
        <taxon>Gammaproteobacteria</taxon>
        <taxon>Legionellales</taxon>
        <taxon>Coxiellaceae</taxon>
        <taxon>Coxiella</taxon>
    </lineage>
</organism>
<gene>
    <name evidence="1" type="primary">atpB</name>
    <name type="ordered locus">CBU_1939</name>
</gene>
<keyword id="KW-0066">ATP synthesis</keyword>
<keyword id="KW-0997">Cell inner membrane</keyword>
<keyword id="KW-1003">Cell membrane</keyword>
<keyword id="KW-0138">CF(0)</keyword>
<keyword id="KW-0375">Hydrogen ion transport</keyword>
<keyword id="KW-0406">Ion transport</keyword>
<keyword id="KW-0472">Membrane</keyword>
<keyword id="KW-1185">Reference proteome</keyword>
<keyword id="KW-0812">Transmembrane</keyword>
<keyword id="KW-1133">Transmembrane helix</keyword>
<keyword id="KW-0813">Transport</keyword>
<sequence>MYAQPKLTSAEYVQHHMSHWKLNLHNFTFTDGGFWTLNLDTLIISVVLGALFILIFYIVARRATASVPGKWQNAIEMAVEAVDGTVKDSFHGDRSLVAPLALTIFIWVFLMNFMDLVPVDLIPRLFQMGGVEHFKAVPTADPTLTFAMSITVFVLVIFYNFKMKGAIGLGKEVLSRPFGWYLMPINVIFRLIDEGVKPISLALRLFGNLFAGELIFILIALLPWWSQFTLGMVWTLFHLLVITVQAFIFMMLTVVYISLAAESH</sequence>
<protein>
    <recommendedName>
        <fullName evidence="1">ATP synthase subunit a</fullName>
    </recommendedName>
    <alternativeName>
        <fullName evidence="1">ATP synthase F0 sector subunit a</fullName>
    </alternativeName>
    <alternativeName>
        <fullName evidence="1">F-ATPase subunit 6</fullName>
    </alternativeName>
</protein>
<reference key="1">
    <citation type="journal article" date="2003" name="Proc. Natl. Acad. Sci. U.S.A.">
        <title>Complete genome sequence of the Q-fever pathogen, Coxiella burnetii.</title>
        <authorList>
            <person name="Seshadri R."/>
            <person name="Paulsen I.T."/>
            <person name="Eisen J.A."/>
            <person name="Read T.D."/>
            <person name="Nelson K.E."/>
            <person name="Nelson W.C."/>
            <person name="Ward N.L."/>
            <person name="Tettelin H."/>
            <person name="Davidsen T.M."/>
            <person name="Beanan M.J."/>
            <person name="DeBoy R.T."/>
            <person name="Daugherty S.C."/>
            <person name="Brinkac L.M."/>
            <person name="Madupu R."/>
            <person name="Dodson R.J."/>
            <person name="Khouri H.M."/>
            <person name="Lee K.H."/>
            <person name="Carty H.A."/>
            <person name="Scanlan D."/>
            <person name="Heinzen R.A."/>
            <person name="Thompson H.A."/>
            <person name="Samuel J.E."/>
            <person name="Fraser C.M."/>
            <person name="Heidelberg J.F."/>
        </authorList>
    </citation>
    <scope>NUCLEOTIDE SEQUENCE [LARGE SCALE GENOMIC DNA]</scope>
    <source>
        <strain>RSA 493 / Nine Mile phase I</strain>
    </source>
</reference>
<comment type="function">
    <text evidence="1">Key component of the proton channel; it plays a direct role in the translocation of protons across the membrane.</text>
</comment>
<comment type="subunit">
    <text evidence="1">F-type ATPases have 2 components, CF(1) - the catalytic core - and CF(0) - the membrane proton channel. CF(1) has five subunits: alpha(3), beta(3), gamma(1), delta(1), epsilon(1). CF(0) has three main subunits: a(1), b(2) and c(9-12). The alpha and beta chains form an alternating ring which encloses part of the gamma chain. CF(1) is attached to CF(0) by a central stalk formed by the gamma and epsilon chains, while a peripheral stalk is formed by the delta and b chains.</text>
</comment>
<comment type="subcellular location">
    <subcellularLocation>
        <location evidence="1">Cell inner membrane</location>
        <topology evidence="1">Multi-pass membrane protein</topology>
    </subcellularLocation>
</comment>
<comment type="similarity">
    <text evidence="1">Belongs to the ATPase A chain family.</text>
</comment>
<name>ATP6_COXBU</name>
<dbReference type="EMBL" id="AE016828">
    <property type="protein sequence ID" value="AAO91429.1"/>
    <property type="molecule type" value="Genomic_DNA"/>
</dbReference>
<dbReference type="RefSeq" id="NP_820915.1">
    <property type="nucleotide sequence ID" value="NC_002971.4"/>
</dbReference>
<dbReference type="RefSeq" id="WP_005770029.1">
    <property type="nucleotide sequence ID" value="NZ_CDBG01000001.1"/>
</dbReference>
<dbReference type="SMR" id="Q83AG1"/>
<dbReference type="STRING" id="227377.CBU_1939"/>
<dbReference type="EnsemblBacteria" id="AAO91429">
    <property type="protein sequence ID" value="AAO91429"/>
    <property type="gene ID" value="CBU_1939"/>
</dbReference>
<dbReference type="GeneID" id="1209852"/>
<dbReference type="KEGG" id="cbu:CBU_1939"/>
<dbReference type="PATRIC" id="fig|227377.7.peg.1924"/>
<dbReference type="eggNOG" id="COG0356">
    <property type="taxonomic scope" value="Bacteria"/>
</dbReference>
<dbReference type="HOGENOM" id="CLU_041018_1_0_6"/>
<dbReference type="OrthoDB" id="9789241at2"/>
<dbReference type="Proteomes" id="UP000002671">
    <property type="component" value="Chromosome"/>
</dbReference>
<dbReference type="GO" id="GO:0005886">
    <property type="term" value="C:plasma membrane"/>
    <property type="evidence" value="ECO:0000318"/>
    <property type="project" value="GO_Central"/>
</dbReference>
<dbReference type="GO" id="GO:0045259">
    <property type="term" value="C:proton-transporting ATP synthase complex"/>
    <property type="evidence" value="ECO:0007669"/>
    <property type="project" value="UniProtKB-KW"/>
</dbReference>
<dbReference type="GO" id="GO:0046933">
    <property type="term" value="F:proton-transporting ATP synthase activity, rotational mechanism"/>
    <property type="evidence" value="ECO:0000318"/>
    <property type="project" value="GO_Central"/>
</dbReference>
<dbReference type="GO" id="GO:0042777">
    <property type="term" value="P:proton motive force-driven plasma membrane ATP synthesis"/>
    <property type="evidence" value="ECO:0000318"/>
    <property type="project" value="GO_Central"/>
</dbReference>
<dbReference type="CDD" id="cd00310">
    <property type="entry name" value="ATP-synt_Fo_a_6"/>
    <property type="match status" value="1"/>
</dbReference>
<dbReference type="FunFam" id="1.20.120.220:FF:000002">
    <property type="entry name" value="ATP synthase subunit a"/>
    <property type="match status" value="1"/>
</dbReference>
<dbReference type="Gene3D" id="1.20.120.220">
    <property type="entry name" value="ATP synthase, F0 complex, subunit A"/>
    <property type="match status" value="1"/>
</dbReference>
<dbReference type="HAMAP" id="MF_01393">
    <property type="entry name" value="ATP_synth_a_bact"/>
    <property type="match status" value="1"/>
</dbReference>
<dbReference type="InterPro" id="IPR045082">
    <property type="entry name" value="ATP_syn_F0_a_bact/chloroplast"/>
</dbReference>
<dbReference type="InterPro" id="IPR000568">
    <property type="entry name" value="ATP_synth_F0_asu"/>
</dbReference>
<dbReference type="InterPro" id="IPR023011">
    <property type="entry name" value="ATP_synth_F0_asu_AS"/>
</dbReference>
<dbReference type="InterPro" id="IPR035908">
    <property type="entry name" value="F0_ATP_A_sf"/>
</dbReference>
<dbReference type="NCBIfam" id="TIGR01131">
    <property type="entry name" value="ATP_synt_6_or_A"/>
    <property type="match status" value="1"/>
</dbReference>
<dbReference type="NCBIfam" id="NF004477">
    <property type="entry name" value="PRK05815.1-1"/>
    <property type="match status" value="1"/>
</dbReference>
<dbReference type="PANTHER" id="PTHR42823">
    <property type="entry name" value="ATP SYNTHASE SUBUNIT A, CHLOROPLASTIC"/>
    <property type="match status" value="1"/>
</dbReference>
<dbReference type="PANTHER" id="PTHR42823:SF3">
    <property type="entry name" value="ATP SYNTHASE SUBUNIT A, CHLOROPLASTIC"/>
    <property type="match status" value="1"/>
</dbReference>
<dbReference type="Pfam" id="PF00119">
    <property type="entry name" value="ATP-synt_A"/>
    <property type="match status" value="1"/>
</dbReference>
<dbReference type="PRINTS" id="PR00123">
    <property type="entry name" value="ATPASEA"/>
</dbReference>
<dbReference type="SUPFAM" id="SSF81336">
    <property type="entry name" value="F1F0 ATP synthase subunit A"/>
    <property type="match status" value="1"/>
</dbReference>
<dbReference type="PROSITE" id="PS00449">
    <property type="entry name" value="ATPASE_A"/>
    <property type="match status" value="1"/>
</dbReference>
<proteinExistence type="inferred from homology"/>
<accession>Q83AG1</accession>
<evidence type="ECO:0000255" key="1">
    <source>
        <dbReference type="HAMAP-Rule" id="MF_01393"/>
    </source>
</evidence>
<feature type="chain" id="PRO_0000362277" description="ATP synthase subunit a">
    <location>
        <begin position="1"/>
        <end position="264"/>
    </location>
</feature>
<feature type="transmembrane region" description="Helical" evidence="1">
    <location>
        <begin position="39"/>
        <end position="59"/>
    </location>
</feature>
<feature type="transmembrane region" description="Helical" evidence="1">
    <location>
        <begin position="97"/>
        <end position="117"/>
    </location>
</feature>
<feature type="transmembrane region" description="Helical" evidence="1">
    <location>
        <begin position="139"/>
        <end position="159"/>
    </location>
</feature>
<feature type="transmembrane region" description="Helical" evidence="1">
    <location>
        <begin position="205"/>
        <end position="225"/>
    </location>
</feature>
<feature type="transmembrane region" description="Helical" evidence="1">
    <location>
        <begin position="239"/>
        <end position="259"/>
    </location>
</feature>